<dbReference type="EC" id="3.1.3.-"/>
<dbReference type="EC" id="3.6.1.1"/>
<dbReference type="EMBL" id="BC106524">
    <property type="protein sequence ID" value="AAI06525.1"/>
    <property type="molecule type" value="mRNA"/>
</dbReference>
<dbReference type="RefSeq" id="NP_001089769.1">
    <property type="nucleotide sequence ID" value="NM_001096300.1"/>
</dbReference>
<dbReference type="SMR" id="Q3B8E3"/>
<dbReference type="DNASU" id="734833"/>
<dbReference type="GeneID" id="734833"/>
<dbReference type="KEGG" id="xla:734833"/>
<dbReference type="AGR" id="Xenbase:XB-GENE-955679"/>
<dbReference type="CTD" id="734833"/>
<dbReference type="Xenbase" id="XB-GENE-955679">
    <property type="gene designation" value="lhpp.S"/>
</dbReference>
<dbReference type="OrthoDB" id="426235at2759"/>
<dbReference type="Proteomes" id="UP000186698">
    <property type="component" value="Chromosome 7S"/>
</dbReference>
<dbReference type="Bgee" id="734833">
    <property type="expression patterns" value="Expressed in muscle tissue and 19 other cell types or tissues"/>
</dbReference>
<dbReference type="GO" id="GO:0005737">
    <property type="term" value="C:cytoplasm"/>
    <property type="evidence" value="ECO:0000318"/>
    <property type="project" value="GO_Central"/>
</dbReference>
<dbReference type="GO" id="GO:0005829">
    <property type="term" value="C:cytosol"/>
    <property type="evidence" value="ECO:0000250"/>
    <property type="project" value="UniProtKB"/>
</dbReference>
<dbReference type="GO" id="GO:0005634">
    <property type="term" value="C:nucleus"/>
    <property type="evidence" value="ECO:0000250"/>
    <property type="project" value="UniProtKB"/>
</dbReference>
<dbReference type="GO" id="GO:0004427">
    <property type="term" value="F:inorganic diphosphate phosphatase activity"/>
    <property type="evidence" value="ECO:0000250"/>
    <property type="project" value="UniProtKB"/>
</dbReference>
<dbReference type="GO" id="GO:0046872">
    <property type="term" value="F:metal ion binding"/>
    <property type="evidence" value="ECO:0007669"/>
    <property type="project" value="UniProtKB-KW"/>
</dbReference>
<dbReference type="GO" id="GO:0016791">
    <property type="term" value="F:phosphatase activity"/>
    <property type="evidence" value="ECO:0000318"/>
    <property type="project" value="GO_Central"/>
</dbReference>
<dbReference type="GO" id="GO:0006796">
    <property type="term" value="P:phosphate-containing compound metabolic process"/>
    <property type="evidence" value="ECO:0000250"/>
    <property type="project" value="UniProtKB"/>
</dbReference>
<dbReference type="CDD" id="cd07509">
    <property type="entry name" value="HAD_PPase"/>
    <property type="match status" value="1"/>
</dbReference>
<dbReference type="FunFam" id="3.40.50.1000:FF:000051">
    <property type="entry name" value="Phospholysine phosphohistidine inorganic pyrophosphate phosphatase"/>
    <property type="match status" value="1"/>
</dbReference>
<dbReference type="Gene3D" id="3.40.50.1000">
    <property type="entry name" value="HAD superfamily/HAD-like"/>
    <property type="match status" value="2"/>
</dbReference>
<dbReference type="InterPro" id="IPR036412">
    <property type="entry name" value="HAD-like_sf"/>
</dbReference>
<dbReference type="InterPro" id="IPR006439">
    <property type="entry name" value="HAD-SF_hydro_IA"/>
</dbReference>
<dbReference type="InterPro" id="IPR006357">
    <property type="entry name" value="HAD-SF_hydro_IIA"/>
</dbReference>
<dbReference type="InterPro" id="IPR023214">
    <property type="entry name" value="HAD_sf"/>
</dbReference>
<dbReference type="InterPro" id="IPR006355">
    <property type="entry name" value="LHPP/HDHD2"/>
</dbReference>
<dbReference type="NCBIfam" id="TIGR01549">
    <property type="entry name" value="HAD-SF-IA-v1"/>
    <property type="match status" value="1"/>
</dbReference>
<dbReference type="NCBIfam" id="TIGR01460">
    <property type="entry name" value="HAD-SF-IIA"/>
    <property type="match status" value="1"/>
</dbReference>
<dbReference type="NCBIfam" id="TIGR01458">
    <property type="entry name" value="HAD-SF-IIA-hyp3"/>
    <property type="match status" value="1"/>
</dbReference>
<dbReference type="PANTHER" id="PTHR19288">
    <property type="entry name" value="4-NITROPHENYLPHOSPHATASE-RELATED"/>
    <property type="match status" value="1"/>
</dbReference>
<dbReference type="PANTHER" id="PTHR19288:SF44">
    <property type="entry name" value="PHOSPHOLYSINE PHOSPHOHISTIDINE INORGANIC PYROPHOSPHATE PHOSPHATASE"/>
    <property type="match status" value="1"/>
</dbReference>
<dbReference type="Pfam" id="PF13344">
    <property type="entry name" value="Hydrolase_6"/>
    <property type="match status" value="1"/>
</dbReference>
<dbReference type="Pfam" id="PF13242">
    <property type="entry name" value="Hydrolase_like"/>
    <property type="match status" value="1"/>
</dbReference>
<dbReference type="SUPFAM" id="SSF56784">
    <property type="entry name" value="HAD-like"/>
    <property type="match status" value="1"/>
</dbReference>
<proteinExistence type="evidence at transcript level"/>
<feature type="chain" id="PRO_0000305078" description="Phospholysine phosphohistidine inorganic pyrophosphate phosphatase">
    <location>
        <begin position="1"/>
        <end position="270"/>
    </location>
</feature>
<feature type="binding site" evidence="1">
    <location>
        <begin position="14"/>
        <end position="16"/>
    </location>
    <ligand>
        <name>substrate</name>
    </ligand>
</feature>
<feature type="binding site" evidence="1">
    <location>
        <position position="14"/>
    </location>
    <ligand>
        <name>Mg(2+)</name>
        <dbReference type="ChEBI" id="CHEBI:18420"/>
    </ligand>
</feature>
<feature type="binding site" evidence="1">
    <location>
        <position position="16"/>
    </location>
    <ligand>
        <name>Mg(2+)</name>
        <dbReference type="ChEBI" id="CHEBI:18420"/>
    </ligand>
</feature>
<feature type="binding site" evidence="1">
    <location>
        <begin position="52"/>
        <end position="53"/>
    </location>
    <ligand>
        <name>substrate</name>
    </ligand>
</feature>
<feature type="binding site" evidence="1">
    <location>
        <position position="187"/>
    </location>
    <ligand>
        <name>substrate</name>
    </ligand>
</feature>
<feature type="binding site" evidence="1">
    <location>
        <position position="212"/>
    </location>
    <ligand>
        <name>Mg(2+)</name>
        <dbReference type="ChEBI" id="CHEBI:18420"/>
    </ligand>
</feature>
<gene>
    <name type="primary">lhpp</name>
</gene>
<reference key="1">
    <citation type="submission" date="2005-10" db="EMBL/GenBank/DDBJ databases">
        <authorList>
            <consortium name="NIH - Xenopus Gene Collection (XGC) project"/>
        </authorList>
    </citation>
    <scope>NUCLEOTIDE SEQUENCE [LARGE SCALE MRNA]</scope>
    <source>
        <tissue>Testis</tissue>
    </source>
</reference>
<accession>Q3B8E3</accession>
<name>LHPP_XENLA</name>
<protein>
    <recommendedName>
        <fullName>Phospholysine phosphohistidine inorganic pyrophosphate phosphatase</fullName>
        <ecNumber>3.1.3.-</ecNumber>
        <ecNumber>3.6.1.1</ecNumber>
    </recommendedName>
</protein>
<organism>
    <name type="scientific">Xenopus laevis</name>
    <name type="common">African clawed frog</name>
    <dbReference type="NCBI Taxonomy" id="8355"/>
    <lineage>
        <taxon>Eukaryota</taxon>
        <taxon>Metazoa</taxon>
        <taxon>Chordata</taxon>
        <taxon>Craniata</taxon>
        <taxon>Vertebrata</taxon>
        <taxon>Euteleostomi</taxon>
        <taxon>Amphibia</taxon>
        <taxon>Batrachia</taxon>
        <taxon>Anura</taxon>
        <taxon>Pipoidea</taxon>
        <taxon>Pipidae</taxon>
        <taxon>Xenopodinae</taxon>
        <taxon>Xenopus</taxon>
        <taxon>Xenopus</taxon>
    </lineage>
</organism>
<keyword id="KW-0963">Cytoplasm</keyword>
<keyword id="KW-0378">Hydrolase</keyword>
<keyword id="KW-0460">Magnesium</keyword>
<keyword id="KW-0479">Metal-binding</keyword>
<keyword id="KW-0539">Nucleus</keyword>
<keyword id="KW-1185">Reference proteome</keyword>
<evidence type="ECO:0000250" key="1"/>
<evidence type="ECO:0000305" key="2"/>
<sequence length="270" mass="29215">MAAWANGVRAVLLDVSGVLYDSGGAGGGSAIQGSVDAVNRIRHAGLKLRFCTNESQATRSHFAQKLKRFGFSISEEEVTAPGPAATRLMKERGLRPHLLVHNDLLPEFESVEKSDPNCVLIGDAAENFSYKNVNRAFQVLINLQKPVLISLGKGRYYKETDGLKLDVGAYMKALEYACDIKAEVVGKPSPNFFLSALEEMGAKPEEALMIGDDIVHDIGGAKSCGLRAVLVRTGKYRPSDEKHPEVTADGYVNNLAHAVDILLASQDCNQ</sequence>
<comment type="function">
    <text evidence="1">Phosphatase that hydrolyzes imidodiphosphate, 3-phosphohistidine and 6-phospholysine. Has broad substrate specificity and can also hydrolyze inorganic diphosphate, but with lower efficiency (By similarity).</text>
</comment>
<comment type="catalytic activity">
    <reaction>
        <text>diphosphate + H2O = 2 phosphate + H(+)</text>
        <dbReference type="Rhea" id="RHEA:24576"/>
        <dbReference type="ChEBI" id="CHEBI:15377"/>
        <dbReference type="ChEBI" id="CHEBI:15378"/>
        <dbReference type="ChEBI" id="CHEBI:33019"/>
        <dbReference type="ChEBI" id="CHEBI:43474"/>
        <dbReference type="EC" id="3.6.1.1"/>
    </reaction>
</comment>
<comment type="cofactor">
    <cofactor evidence="1">
        <name>Mg(2+)</name>
        <dbReference type="ChEBI" id="CHEBI:18420"/>
    </cofactor>
    <text evidence="1">Binds 1 Mg(2+) ion per subunit.</text>
</comment>
<comment type="subcellular location">
    <subcellularLocation>
        <location evidence="1">Cytoplasm</location>
    </subcellularLocation>
    <subcellularLocation>
        <location evidence="1">Nucleus</location>
    </subcellularLocation>
</comment>
<comment type="similarity">
    <text evidence="2">Belongs to the HAD-like hydrolase superfamily.</text>
</comment>